<keyword id="KW-0030">Aminoacyl-tRNA synthetase</keyword>
<keyword id="KW-0067">ATP-binding</keyword>
<keyword id="KW-0963">Cytoplasm</keyword>
<keyword id="KW-0436">Ligase</keyword>
<keyword id="KW-0479">Metal-binding</keyword>
<keyword id="KW-0547">Nucleotide-binding</keyword>
<keyword id="KW-0648">Protein biosynthesis</keyword>
<keyword id="KW-0694">RNA-binding</keyword>
<keyword id="KW-0820">tRNA-binding</keyword>
<keyword id="KW-0862">Zinc</keyword>
<protein>
    <recommendedName>
        <fullName evidence="1">Alanine--tRNA ligase</fullName>
        <ecNumber evidence="1">6.1.1.7</ecNumber>
    </recommendedName>
    <alternativeName>
        <fullName evidence="1">Alanyl-tRNA synthetase</fullName>
        <shortName evidence="1">AlaRS</shortName>
    </alternativeName>
</protein>
<dbReference type="EC" id="6.1.1.7" evidence="1"/>
<dbReference type="EMBL" id="BA000017">
    <property type="protein sequence ID" value="BAB57780.1"/>
    <property type="molecule type" value="Genomic_DNA"/>
</dbReference>
<dbReference type="RefSeq" id="WP_000734075.1">
    <property type="nucleotide sequence ID" value="NC_002758.2"/>
</dbReference>
<dbReference type="SMR" id="P67010"/>
<dbReference type="KEGG" id="sav:SAV1618"/>
<dbReference type="HOGENOM" id="CLU_004485_1_1_9"/>
<dbReference type="PhylomeDB" id="P67010"/>
<dbReference type="Proteomes" id="UP000002481">
    <property type="component" value="Chromosome"/>
</dbReference>
<dbReference type="GO" id="GO:0005829">
    <property type="term" value="C:cytosol"/>
    <property type="evidence" value="ECO:0007669"/>
    <property type="project" value="TreeGrafter"/>
</dbReference>
<dbReference type="GO" id="GO:0004813">
    <property type="term" value="F:alanine-tRNA ligase activity"/>
    <property type="evidence" value="ECO:0007669"/>
    <property type="project" value="UniProtKB-UniRule"/>
</dbReference>
<dbReference type="GO" id="GO:0002161">
    <property type="term" value="F:aminoacyl-tRNA deacylase activity"/>
    <property type="evidence" value="ECO:0007669"/>
    <property type="project" value="TreeGrafter"/>
</dbReference>
<dbReference type="GO" id="GO:0005524">
    <property type="term" value="F:ATP binding"/>
    <property type="evidence" value="ECO:0007669"/>
    <property type="project" value="UniProtKB-UniRule"/>
</dbReference>
<dbReference type="GO" id="GO:0140096">
    <property type="term" value="F:catalytic activity, acting on a protein"/>
    <property type="evidence" value="ECO:0007669"/>
    <property type="project" value="UniProtKB-ARBA"/>
</dbReference>
<dbReference type="GO" id="GO:0016740">
    <property type="term" value="F:transferase activity"/>
    <property type="evidence" value="ECO:0007669"/>
    <property type="project" value="UniProtKB-ARBA"/>
</dbReference>
<dbReference type="GO" id="GO:0000049">
    <property type="term" value="F:tRNA binding"/>
    <property type="evidence" value="ECO:0007669"/>
    <property type="project" value="UniProtKB-KW"/>
</dbReference>
<dbReference type="GO" id="GO:0008270">
    <property type="term" value="F:zinc ion binding"/>
    <property type="evidence" value="ECO:0007669"/>
    <property type="project" value="UniProtKB-UniRule"/>
</dbReference>
<dbReference type="GO" id="GO:0006419">
    <property type="term" value="P:alanyl-tRNA aminoacylation"/>
    <property type="evidence" value="ECO:0007669"/>
    <property type="project" value="UniProtKB-UniRule"/>
</dbReference>
<dbReference type="CDD" id="cd00673">
    <property type="entry name" value="AlaRS_core"/>
    <property type="match status" value="1"/>
</dbReference>
<dbReference type="FunFam" id="2.40.30.130:FF:000001">
    <property type="entry name" value="Alanine--tRNA ligase"/>
    <property type="match status" value="1"/>
</dbReference>
<dbReference type="FunFam" id="3.10.310.40:FF:000001">
    <property type="entry name" value="Alanine--tRNA ligase"/>
    <property type="match status" value="1"/>
</dbReference>
<dbReference type="FunFam" id="3.30.54.20:FF:000001">
    <property type="entry name" value="Alanine--tRNA ligase"/>
    <property type="match status" value="1"/>
</dbReference>
<dbReference type="FunFam" id="3.30.930.10:FF:000046">
    <property type="entry name" value="Alanine--tRNA ligase"/>
    <property type="match status" value="1"/>
</dbReference>
<dbReference type="FunFam" id="3.30.980.10:FF:000004">
    <property type="entry name" value="Alanine--tRNA ligase, cytoplasmic"/>
    <property type="match status" value="1"/>
</dbReference>
<dbReference type="Gene3D" id="2.40.30.130">
    <property type="match status" value="1"/>
</dbReference>
<dbReference type="Gene3D" id="3.10.310.40">
    <property type="match status" value="1"/>
</dbReference>
<dbReference type="Gene3D" id="3.30.54.20">
    <property type="match status" value="1"/>
</dbReference>
<dbReference type="Gene3D" id="3.30.930.10">
    <property type="entry name" value="Bira Bifunctional Protein, Domain 2"/>
    <property type="match status" value="1"/>
</dbReference>
<dbReference type="Gene3D" id="3.30.980.10">
    <property type="entry name" value="Threonyl-trna Synthetase, Chain A, domain 2"/>
    <property type="match status" value="1"/>
</dbReference>
<dbReference type="HAMAP" id="MF_00036_B">
    <property type="entry name" value="Ala_tRNA_synth_B"/>
    <property type="match status" value="1"/>
</dbReference>
<dbReference type="InterPro" id="IPR045864">
    <property type="entry name" value="aa-tRNA-synth_II/BPL/LPL"/>
</dbReference>
<dbReference type="InterPro" id="IPR002318">
    <property type="entry name" value="Ala-tRNA-lgiase_IIc"/>
</dbReference>
<dbReference type="InterPro" id="IPR018162">
    <property type="entry name" value="Ala-tRNA-ligase_IIc_anticod-bd"/>
</dbReference>
<dbReference type="InterPro" id="IPR018165">
    <property type="entry name" value="Ala-tRNA-synth_IIc_core"/>
</dbReference>
<dbReference type="InterPro" id="IPR018164">
    <property type="entry name" value="Ala-tRNA-synth_IIc_N"/>
</dbReference>
<dbReference type="InterPro" id="IPR050058">
    <property type="entry name" value="Ala-tRNA_ligase"/>
</dbReference>
<dbReference type="InterPro" id="IPR023033">
    <property type="entry name" value="Ala_tRNA_ligase_euk/bac"/>
</dbReference>
<dbReference type="InterPro" id="IPR003156">
    <property type="entry name" value="DHHA1_dom"/>
</dbReference>
<dbReference type="InterPro" id="IPR018163">
    <property type="entry name" value="Thr/Ala-tRNA-synth_IIc_edit"/>
</dbReference>
<dbReference type="InterPro" id="IPR009000">
    <property type="entry name" value="Transl_B-barrel_sf"/>
</dbReference>
<dbReference type="InterPro" id="IPR012947">
    <property type="entry name" value="tRNA_SAD"/>
</dbReference>
<dbReference type="NCBIfam" id="TIGR00344">
    <property type="entry name" value="alaS"/>
    <property type="match status" value="1"/>
</dbReference>
<dbReference type="PANTHER" id="PTHR11777:SF9">
    <property type="entry name" value="ALANINE--TRNA LIGASE, CYTOPLASMIC"/>
    <property type="match status" value="1"/>
</dbReference>
<dbReference type="PANTHER" id="PTHR11777">
    <property type="entry name" value="ALANYL-TRNA SYNTHETASE"/>
    <property type="match status" value="1"/>
</dbReference>
<dbReference type="Pfam" id="PF02272">
    <property type="entry name" value="DHHA1"/>
    <property type="match status" value="1"/>
</dbReference>
<dbReference type="Pfam" id="PF01411">
    <property type="entry name" value="tRNA-synt_2c"/>
    <property type="match status" value="1"/>
</dbReference>
<dbReference type="Pfam" id="PF07973">
    <property type="entry name" value="tRNA_SAD"/>
    <property type="match status" value="1"/>
</dbReference>
<dbReference type="PRINTS" id="PR00980">
    <property type="entry name" value="TRNASYNTHALA"/>
</dbReference>
<dbReference type="SMART" id="SM00863">
    <property type="entry name" value="tRNA_SAD"/>
    <property type="match status" value="1"/>
</dbReference>
<dbReference type="SUPFAM" id="SSF55681">
    <property type="entry name" value="Class II aaRS and biotin synthetases"/>
    <property type="match status" value="1"/>
</dbReference>
<dbReference type="SUPFAM" id="SSF101353">
    <property type="entry name" value="Putative anticodon-binding domain of alanyl-tRNA synthetase (AlaRS)"/>
    <property type="match status" value="1"/>
</dbReference>
<dbReference type="SUPFAM" id="SSF55186">
    <property type="entry name" value="ThrRS/AlaRS common domain"/>
    <property type="match status" value="1"/>
</dbReference>
<dbReference type="SUPFAM" id="SSF50447">
    <property type="entry name" value="Translation proteins"/>
    <property type="match status" value="1"/>
</dbReference>
<dbReference type="PROSITE" id="PS50860">
    <property type="entry name" value="AA_TRNA_LIGASE_II_ALA"/>
    <property type="match status" value="1"/>
</dbReference>
<gene>
    <name evidence="1" type="primary">alaS</name>
    <name type="ordered locus">SAV1618</name>
</gene>
<sequence length="876" mass="98538">MKKLKASEIRQKYLDFFVEKGHMVEPSAPLVPIDDDTLLWINSGVATLKKYFDGRETPKKPRIVNSQKAIRTNDIENVGFTARHHTFFEMLGNFSIGDYFKQEAIEFAWEFLTSDKWMGMEPDKLYVTIHPEDMEAYNIWHKDIGLEESRIIRIEGNFWDIGEGPSGPNTEIFYDRGEAYGQDDPAEEMYPGGENERYLEVWNLVFSEFNHNKDHSYTPLPNKNIDTGMGLERMASVSQNVRTNYETDLFMPIMNEIEKVSGKQYLVNNEQDVAFKVIADHIRTIAFAISDGALPANEGRGYVLRRLLRRAVRFSQTLGINEPFMYKLVDIVADIMEPYYPNVKEKADFIKRVIKSEEERFHETLEDGLAILNELIKKAKATTNEINGKDAFKLYDTYGFPIELTEEIAVQAGLKVDMTTFESEMQQQRDRARQARQNSQSMQVQSEVLKNITSASTFVGYDTATAQTTLTHLIYNGEEVSQVEAGETVYFMLTETPFYAVSGGQVADTGIVYNDNFEIAVSEVTKAPNGQNLHKGVVQFGQVNVGATVSAEVNQNDRRDIQKNHSATHLLHAALKSVLGDHVNQAGSLVEADRLRFDFSHFGPMTNDEIDQVERLVNEEIWKGIDVNIQEMDIASAKEMGAMALFGEKYGDVVRVVNMAPFSIELCGGIHVRNTSEIGLFKIVSESGTGAGVRRIEALTGKAAFLYLEDIQEKFNTMKSQMKVKSDDQVVEKLTQLQDEEKALLKQLEQRDKEITSLKMGNIEDQVEEINGYKVLVTEVDVPNAKAIRSTMDDFKSKLQDTIIILASNVDDKVSMVATVPKSLTNNVKAGDLIKQMAPIVGGKGGGRPDMAQGGGTQPENISKSLSFIKDYIKNL</sequence>
<comment type="function">
    <text evidence="1">Catalyzes the attachment of alanine to tRNA(Ala) in a two-step reaction: alanine is first activated by ATP to form Ala-AMP and then transferred to the acceptor end of tRNA(Ala). Also edits incorrectly charged Ser-tRNA(Ala) and Gly-tRNA(Ala) via its editing domain.</text>
</comment>
<comment type="catalytic activity">
    <reaction evidence="1">
        <text>tRNA(Ala) + L-alanine + ATP = L-alanyl-tRNA(Ala) + AMP + diphosphate</text>
        <dbReference type="Rhea" id="RHEA:12540"/>
        <dbReference type="Rhea" id="RHEA-COMP:9657"/>
        <dbReference type="Rhea" id="RHEA-COMP:9923"/>
        <dbReference type="ChEBI" id="CHEBI:30616"/>
        <dbReference type="ChEBI" id="CHEBI:33019"/>
        <dbReference type="ChEBI" id="CHEBI:57972"/>
        <dbReference type="ChEBI" id="CHEBI:78442"/>
        <dbReference type="ChEBI" id="CHEBI:78497"/>
        <dbReference type="ChEBI" id="CHEBI:456215"/>
        <dbReference type="EC" id="6.1.1.7"/>
    </reaction>
</comment>
<comment type="cofactor">
    <cofactor evidence="1">
        <name>Zn(2+)</name>
        <dbReference type="ChEBI" id="CHEBI:29105"/>
    </cofactor>
    <text evidence="1">Binds 1 zinc ion per subunit.</text>
</comment>
<comment type="subcellular location">
    <subcellularLocation>
        <location evidence="1">Cytoplasm</location>
    </subcellularLocation>
</comment>
<comment type="domain">
    <text evidence="1">Consists of three domains; the N-terminal catalytic domain, the editing domain and the C-terminal C-Ala domain. The editing domain removes incorrectly charged amino acids, while the C-Ala domain, along with tRNA(Ala), serves as a bridge to cooperatively bring together the editing and aminoacylation centers thus stimulating deacylation of misacylated tRNAs.</text>
</comment>
<comment type="similarity">
    <text evidence="1">Belongs to the class-II aminoacyl-tRNA synthetase family.</text>
</comment>
<accession>P67010</accession>
<accession>Q99TN1</accession>
<proteinExistence type="inferred from homology"/>
<organism>
    <name type="scientific">Staphylococcus aureus (strain Mu50 / ATCC 700699)</name>
    <dbReference type="NCBI Taxonomy" id="158878"/>
    <lineage>
        <taxon>Bacteria</taxon>
        <taxon>Bacillati</taxon>
        <taxon>Bacillota</taxon>
        <taxon>Bacilli</taxon>
        <taxon>Bacillales</taxon>
        <taxon>Staphylococcaceae</taxon>
        <taxon>Staphylococcus</taxon>
    </lineage>
</organism>
<feature type="chain" id="PRO_0000075204" description="Alanine--tRNA ligase">
    <location>
        <begin position="1"/>
        <end position="876"/>
    </location>
</feature>
<feature type="binding site" evidence="1">
    <location>
        <position position="565"/>
    </location>
    <ligand>
        <name>Zn(2+)</name>
        <dbReference type="ChEBI" id="CHEBI:29105"/>
    </ligand>
</feature>
<feature type="binding site" evidence="1">
    <location>
        <position position="569"/>
    </location>
    <ligand>
        <name>Zn(2+)</name>
        <dbReference type="ChEBI" id="CHEBI:29105"/>
    </ligand>
</feature>
<feature type="binding site" evidence="1">
    <location>
        <position position="667"/>
    </location>
    <ligand>
        <name>Zn(2+)</name>
        <dbReference type="ChEBI" id="CHEBI:29105"/>
    </ligand>
</feature>
<feature type="binding site" evidence="1">
    <location>
        <position position="671"/>
    </location>
    <ligand>
        <name>Zn(2+)</name>
        <dbReference type="ChEBI" id="CHEBI:29105"/>
    </ligand>
</feature>
<name>SYA_STAAM</name>
<reference key="1">
    <citation type="journal article" date="2001" name="Lancet">
        <title>Whole genome sequencing of meticillin-resistant Staphylococcus aureus.</title>
        <authorList>
            <person name="Kuroda M."/>
            <person name="Ohta T."/>
            <person name="Uchiyama I."/>
            <person name="Baba T."/>
            <person name="Yuzawa H."/>
            <person name="Kobayashi I."/>
            <person name="Cui L."/>
            <person name="Oguchi A."/>
            <person name="Aoki K."/>
            <person name="Nagai Y."/>
            <person name="Lian J.-Q."/>
            <person name="Ito T."/>
            <person name="Kanamori M."/>
            <person name="Matsumaru H."/>
            <person name="Maruyama A."/>
            <person name="Murakami H."/>
            <person name="Hosoyama A."/>
            <person name="Mizutani-Ui Y."/>
            <person name="Takahashi N.K."/>
            <person name="Sawano T."/>
            <person name="Inoue R."/>
            <person name="Kaito C."/>
            <person name="Sekimizu K."/>
            <person name="Hirakawa H."/>
            <person name="Kuhara S."/>
            <person name="Goto S."/>
            <person name="Yabuzaki J."/>
            <person name="Kanehisa M."/>
            <person name="Yamashita A."/>
            <person name="Oshima K."/>
            <person name="Furuya K."/>
            <person name="Yoshino C."/>
            <person name="Shiba T."/>
            <person name="Hattori M."/>
            <person name="Ogasawara N."/>
            <person name="Hayashi H."/>
            <person name="Hiramatsu K."/>
        </authorList>
    </citation>
    <scope>NUCLEOTIDE SEQUENCE [LARGE SCALE GENOMIC DNA]</scope>
    <source>
        <strain>Mu50 / ATCC 700699</strain>
    </source>
</reference>
<evidence type="ECO:0000255" key="1">
    <source>
        <dbReference type="HAMAP-Rule" id="MF_00036"/>
    </source>
</evidence>